<protein>
    <recommendedName>
        <fullName evidence="1">Nucleoid-associated protein CKL_3826</fullName>
    </recommendedName>
</protein>
<gene>
    <name type="ordered locus">CKL_3826</name>
</gene>
<dbReference type="EMBL" id="CP000673">
    <property type="protein sequence ID" value="EDK35804.1"/>
    <property type="molecule type" value="Genomic_DNA"/>
</dbReference>
<dbReference type="RefSeq" id="WP_012104139.1">
    <property type="nucleotide sequence ID" value="NC_009706.1"/>
</dbReference>
<dbReference type="SMR" id="A5N3V8"/>
<dbReference type="STRING" id="431943.CKL_3826"/>
<dbReference type="KEGG" id="ckl:CKL_3826"/>
<dbReference type="eggNOG" id="COG0718">
    <property type="taxonomic scope" value="Bacteria"/>
</dbReference>
<dbReference type="HOGENOM" id="CLU_140930_1_0_9"/>
<dbReference type="Proteomes" id="UP000002411">
    <property type="component" value="Chromosome"/>
</dbReference>
<dbReference type="GO" id="GO:0043590">
    <property type="term" value="C:bacterial nucleoid"/>
    <property type="evidence" value="ECO:0007669"/>
    <property type="project" value="UniProtKB-UniRule"/>
</dbReference>
<dbReference type="GO" id="GO:0005829">
    <property type="term" value="C:cytosol"/>
    <property type="evidence" value="ECO:0007669"/>
    <property type="project" value="TreeGrafter"/>
</dbReference>
<dbReference type="GO" id="GO:0003677">
    <property type="term" value="F:DNA binding"/>
    <property type="evidence" value="ECO:0007669"/>
    <property type="project" value="UniProtKB-UniRule"/>
</dbReference>
<dbReference type="FunFam" id="3.30.1310.10:FF:000002">
    <property type="entry name" value="Nucleoid-associated protein IKC_06587"/>
    <property type="match status" value="1"/>
</dbReference>
<dbReference type="Gene3D" id="3.30.1310.10">
    <property type="entry name" value="Nucleoid-associated protein YbaB-like domain"/>
    <property type="match status" value="1"/>
</dbReference>
<dbReference type="HAMAP" id="MF_00274">
    <property type="entry name" value="DNA_YbaB_EbfC"/>
    <property type="match status" value="1"/>
</dbReference>
<dbReference type="InterPro" id="IPR036894">
    <property type="entry name" value="YbaB-like_sf"/>
</dbReference>
<dbReference type="InterPro" id="IPR004401">
    <property type="entry name" value="YbaB/EbfC"/>
</dbReference>
<dbReference type="NCBIfam" id="TIGR00103">
    <property type="entry name" value="DNA_YbaB_EbfC"/>
    <property type="match status" value="1"/>
</dbReference>
<dbReference type="PANTHER" id="PTHR33449">
    <property type="entry name" value="NUCLEOID-ASSOCIATED PROTEIN YBAB"/>
    <property type="match status" value="1"/>
</dbReference>
<dbReference type="PANTHER" id="PTHR33449:SF1">
    <property type="entry name" value="NUCLEOID-ASSOCIATED PROTEIN YBAB"/>
    <property type="match status" value="1"/>
</dbReference>
<dbReference type="Pfam" id="PF02575">
    <property type="entry name" value="YbaB_DNA_bd"/>
    <property type="match status" value="1"/>
</dbReference>
<dbReference type="PIRSF" id="PIRSF004555">
    <property type="entry name" value="UCP004555"/>
    <property type="match status" value="1"/>
</dbReference>
<dbReference type="SUPFAM" id="SSF82607">
    <property type="entry name" value="YbaB-like"/>
    <property type="match status" value="1"/>
</dbReference>
<reference key="1">
    <citation type="journal article" date="2008" name="Proc. Natl. Acad. Sci. U.S.A.">
        <title>The genome of Clostridium kluyveri, a strict anaerobe with unique metabolic features.</title>
        <authorList>
            <person name="Seedorf H."/>
            <person name="Fricke W.F."/>
            <person name="Veith B."/>
            <person name="Brueggemann H."/>
            <person name="Liesegang H."/>
            <person name="Strittmatter A."/>
            <person name="Miethke M."/>
            <person name="Buckel W."/>
            <person name="Hinderberger J."/>
            <person name="Li F."/>
            <person name="Hagemeier C."/>
            <person name="Thauer R.K."/>
            <person name="Gottschalk G."/>
        </authorList>
    </citation>
    <scope>NUCLEOTIDE SEQUENCE [LARGE SCALE GENOMIC DNA]</scope>
    <source>
        <strain>ATCC 8527 / DSM 555 / NBRC 12016 / NCIMB 10680 / K1</strain>
    </source>
</reference>
<sequence length="114" mass="12324">MARGGFPNFGGGGNMNNLMKQAQKFQKQMEDMQSELENKEFSATAGGEAITVVVNGKKQIVSIKIKPEVVDPEDVEMLEDLVLTACNQALKSAEDQTASEMKKLTGGLNIPGMF</sequence>
<keyword id="KW-0963">Cytoplasm</keyword>
<keyword id="KW-0238">DNA-binding</keyword>
<keyword id="KW-1185">Reference proteome</keyword>
<organism>
    <name type="scientific">Clostridium kluyveri (strain ATCC 8527 / DSM 555 / NBRC 12016 / NCIMB 10680 / K1)</name>
    <dbReference type="NCBI Taxonomy" id="431943"/>
    <lineage>
        <taxon>Bacteria</taxon>
        <taxon>Bacillati</taxon>
        <taxon>Bacillota</taxon>
        <taxon>Clostridia</taxon>
        <taxon>Eubacteriales</taxon>
        <taxon>Clostridiaceae</taxon>
        <taxon>Clostridium</taxon>
    </lineage>
</organism>
<evidence type="ECO:0000255" key="1">
    <source>
        <dbReference type="HAMAP-Rule" id="MF_00274"/>
    </source>
</evidence>
<proteinExistence type="inferred from homology"/>
<feature type="chain" id="PRO_1000078752" description="Nucleoid-associated protein CKL_3826">
    <location>
        <begin position="1"/>
        <end position="114"/>
    </location>
</feature>
<comment type="function">
    <text evidence="1">Binds to DNA and alters its conformation. May be involved in regulation of gene expression, nucleoid organization and DNA protection.</text>
</comment>
<comment type="subunit">
    <text evidence="1">Homodimer.</text>
</comment>
<comment type="subcellular location">
    <subcellularLocation>
        <location evidence="1">Cytoplasm</location>
        <location evidence="1">Nucleoid</location>
    </subcellularLocation>
</comment>
<comment type="similarity">
    <text evidence="1">Belongs to the YbaB/EbfC family.</text>
</comment>
<name>Y3826_CLOK5</name>
<accession>A5N3V8</accession>